<name>TMCAL_STRZJ</name>
<dbReference type="EC" id="6.3.4.-" evidence="1"/>
<dbReference type="EMBL" id="CP000919">
    <property type="protein sequence ID" value="ACO18959.1"/>
    <property type="molecule type" value="Genomic_DNA"/>
</dbReference>
<dbReference type="RefSeq" id="WP_000156351.1">
    <property type="nucleotide sequence ID" value="NC_012466.1"/>
</dbReference>
<dbReference type="SMR" id="C1CFW4"/>
<dbReference type="KEGG" id="sjj:SPJ_1638"/>
<dbReference type="HOGENOM" id="CLU_038915_0_2_9"/>
<dbReference type="Proteomes" id="UP000002206">
    <property type="component" value="Chromosome"/>
</dbReference>
<dbReference type="GO" id="GO:0005737">
    <property type="term" value="C:cytoplasm"/>
    <property type="evidence" value="ECO:0007669"/>
    <property type="project" value="UniProtKB-SubCell"/>
</dbReference>
<dbReference type="GO" id="GO:0005524">
    <property type="term" value="F:ATP binding"/>
    <property type="evidence" value="ECO:0007669"/>
    <property type="project" value="UniProtKB-KW"/>
</dbReference>
<dbReference type="GO" id="GO:0016879">
    <property type="term" value="F:ligase activity, forming carbon-nitrogen bonds"/>
    <property type="evidence" value="ECO:0007669"/>
    <property type="project" value="UniProtKB-UniRule"/>
</dbReference>
<dbReference type="GO" id="GO:0000049">
    <property type="term" value="F:tRNA binding"/>
    <property type="evidence" value="ECO:0007669"/>
    <property type="project" value="UniProtKB-KW"/>
</dbReference>
<dbReference type="GO" id="GO:0006400">
    <property type="term" value="P:tRNA modification"/>
    <property type="evidence" value="ECO:0007669"/>
    <property type="project" value="UniProtKB-UniRule"/>
</dbReference>
<dbReference type="Gene3D" id="3.40.50.620">
    <property type="entry name" value="HUPs"/>
    <property type="match status" value="1"/>
</dbReference>
<dbReference type="HAMAP" id="MF_01539">
    <property type="entry name" value="TmcAL"/>
    <property type="match status" value="1"/>
</dbReference>
<dbReference type="InterPro" id="IPR014729">
    <property type="entry name" value="Rossmann-like_a/b/a_fold"/>
</dbReference>
<dbReference type="InterPro" id="IPR008513">
    <property type="entry name" value="tRNA(Met)_cyd_acetate_ligase"/>
</dbReference>
<dbReference type="NCBIfam" id="NF010191">
    <property type="entry name" value="PRK13670.1"/>
    <property type="match status" value="1"/>
</dbReference>
<dbReference type="PANTHER" id="PTHR37825">
    <property type="entry name" value="TRNA(MET) CYTIDINE ACETATE LIGASE"/>
    <property type="match status" value="1"/>
</dbReference>
<dbReference type="PANTHER" id="PTHR37825:SF1">
    <property type="entry name" value="TRNA(MET) CYTIDINE ACETATE LIGASE"/>
    <property type="match status" value="1"/>
</dbReference>
<dbReference type="Pfam" id="PF05636">
    <property type="entry name" value="HIGH_NTase1"/>
    <property type="match status" value="1"/>
</dbReference>
<dbReference type="SUPFAM" id="SSF52374">
    <property type="entry name" value="Nucleotidylyl transferase"/>
    <property type="match status" value="1"/>
</dbReference>
<proteinExistence type="inferred from homology"/>
<evidence type="ECO:0000255" key="1">
    <source>
        <dbReference type="HAMAP-Rule" id="MF_01539"/>
    </source>
</evidence>
<accession>C1CFW4</accession>
<sequence length="365" mass="41248">MTITGIIAEFNPFHNGHKYLLDQAEGLKIVAMSGNFMQRGEPAIVDKWTRAQMALENGADLVVELPFLVSVQAADFFGQGAVNILDRLGIDSLVFGTEEVRDYQKIADLYTEKGAEMEKFVENLPDSLSYPQKTQAMWKEFAGLDFSGNTPNHVLALAYAKAVAGRNIKLHPIQRQGAGYHSVNKDVDFASATALRQHQKDQDFLERFMPSVALFEQASKVIWEDYFPLLRYQILSNPDLTTIYQVNQEMAVRIKEAIKTAQSVEELVELVTTKRYTKARVRRLLTYILMQARENVLPEAIHVLGFTEKGRQHLKSLKGQVSLVSRIGKEPWDAMTQKADQIYQLGNPSIAEQNFGRVPIRIETN</sequence>
<comment type="function">
    <text evidence="1">Catalyzes the formation of N(4)-acetylcytidine (ac(4)C) at the wobble position of elongator tRNA(Met), using acetate and ATP as substrates. First activates an acetate ion to form acetyladenylate (Ac-AMP) and then transfers the acetyl group to tRNA to form ac(4)C34.</text>
</comment>
<comment type="catalytic activity">
    <reaction evidence="1">
        <text>cytidine(34) in elongator tRNA(Met) + acetate + ATP = N(4)-acetylcytidine(34) in elongator tRNA(Met) + AMP + diphosphate</text>
        <dbReference type="Rhea" id="RHEA:58144"/>
        <dbReference type="Rhea" id="RHEA-COMP:10693"/>
        <dbReference type="Rhea" id="RHEA-COMP:10694"/>
        <dbReference type="ChEBI" id="CHEBI:30089"/>
        <dbReference type="ChEBI" id="CHEBI:30616"/>
        <dbReference type="ChEBI" id="CHEBI:33019"/>
        <dbReference type="ChEBI" id="CHEBI:74900"/>
        <dbReference type="ChEBI" id="CHEBI:82748"/>
        <dbReference type="ChEBI" id="CHEBI:456215"/>
    </reaction>
</comment>
<comment type="subcellular location">
    <subcellularLocation>
        <location evidence="1">Cytoplasm</location>
    </subcellularLocation>
</comment>
<comment type="similarity">
    <text evidence="1">Belongs to the TmcAL family.</text>
</comment>
<organism>
    <name type="scientific">Streptococcus pneumoniae (strain JJA)</name>
    <dbReference type="NCBI Taxonomy" id="488222"/>
    <lineage>
        <taxon>Bacteria</taxon>
        <taxon>Bacillati</taxon>
        <taxon>Bacillota</taxon>
        <taxon>Bacilli</taxon>
        <taxon>Lactobacillales</taxon>
        <taxon>Streptococcaceae</taxon>
        <taxon>Streptococcus</taxon>
    </lineage>
</organism>
<gene>
    <name evidence="1" type="primary">tmcAL</name>
    <name type="ordered locus">SPJ_1638</name>
</gene>
<reference key="1">
    <citation type="journal article" date="2010" name="Genome Biol.">
        <title>Structure and dynamics of the pan-genome of Streptococcus pneumoniae and closely related species.</title>
        <authorList>
            <person name="Donati C."/>
            <person name="Hiller N.L."/>
            <person name="Tettelin H."/>
            <person name="Muzzi A."/>
            <person name="Croucher N.J."/>
            <person name="Angiuoli S.V."/>
            <person name="Oggioni M."/>
            <person name="Dunning Hotopp J.C."/>
            <person name="Hu F.Z."/>
            <person name="Riley D.R."/>
            <person name="Covacci A."/>
            <person name="Mitchell T.J."/>
            <person name="Bentley S.D."/>
            <person name="Kilian M."/>
            <person name="Ehrlich G.D."/>
            <person name="Rappuoli R."/>
            <person name="Moxon E.R."/>
            <person name="Masignani V."/>
        </authorList>
    </citation>
    <scope>NUCLEOTIDE SEQUENCE [LARGE SCALE GENOMIC DNA]</scope>
    <source>
        <strain>JJA</strain>
    </source>
</reference>
<protein>
    <recommendedName>
        <fullName evidence="1">tRNA(Met) cytidine acetate ligase</fullName>
        <ecNumber evidence="1">6.3.4.-</ecNumber>
    </recommendedName>
</protein>
<feature type="chain" id="PRO_1000185225" description="tRNA(Met) cytidine acetate ligase">
    <location>
        <begin position="1"/>
        <end position="365"/>
    </location>
</feature>
<feature type="binding site" evidence="1">
    <location>
        <begin position="7"/>
        <end position="20"/>
    </location>
    <ligand>
        <name>ATP</name>
        <dbReference type="ChEBI" id="CHEBI:30616"/>
    </ligand>
</feature>
<feature type="binding site" evidence="1">
    <location>
        <position position="96"/>
    </location>
    <ligand>
        <name>ATP</name>
        <dbReference type="ChEBI" id="CHEBI:30616"/>
    </ligand>
</feature>
<feature type="binding site" evidence="1">
    <location>
        <position position="152"/>
    </location>
    <ligand>
        <name>ATP</name>
        <dbReference type="ChEBI" id="CHEBI:30616"/>
    </ligand>
</feature>
<feature type="binding site" evidence="1">
    <location>
        <position position="175"/>
    </location>
    <ligand>
        <name>ATP</name>
        <dbReference type="ChEBI" id="CHEBI:30616"/>
    </ligand>
</feature>
<keyword id="KW-0067">ATP-binding</keyword>
<keyword id="KW-0963">Cytoplasm</keyword>
<keyword id="KW-0436">Ligase</keyword>
<keyword id="KW-0547">Nucleotide-binding</keyword>
<keyword id="KW-0694">RNA-binding</keyword>
<keyword id="KW-0819">tRNA processing</keyword>
<keyword id="KW-0820">tRNA-binding</keyword>